<evidence type="ECO:0000255" key="1">
    <source>
        <dbReference type="HAMAP-Rule" id="MF_01043"/>
    </source>
</evidence>
<proteinExistence type="inferred from homology"/>
<keyword id="KW-1003">Cell membrane</keyword>
<keyword id="KW-0444">Lipid biosynthesis</keyword>
<keyword id="KW-0443">Lipid metabolism</keyword>
<keyword id="KW-0472">Membrane</keyword>
<keyword id="KW-0594">Phospholipid biosynthesis</keyword>
<keyword id="KW-1208">Phospholipid metabolism</keyword>
<keyword id="KW-0808">Transferase</keyword>
<keyword id="KW-0812">Transmembrane</keyword>
<keyword id="KW-1133">Transmembrane helix</keyword>
<reference key="1">
    <citation type="journal article" date="2010" name="Genome Biol.">
        <title>Structure and dynamics of the pan-genome of Streptococcus pneumoniae and closely related species.</title>
        <authorList>
            <person name="Donati C."/>
            <person name="Hiller N.L."/>
            <person name="Tettelin H."/>
            <person name="Muzzi A."/>
            <person name="Croucher N.J."/>
            <person name="Angiuoli S.V."/>
            <person name="Oggioni M."/>
            <person name="Dunning Hotopp J.C."/>
            <person name="Hu F.Z."/>
            <person name="Riley D.R."/>
            <person name="Covacci A."/>
            <person name="Mitchell T.J."/>
            <person name="Bentley S.D."/>
            <person name="Kilian M."/>
            <person name="Ehrlich G.D."/>
            <person name="Rappuoli R."/>
            <person name="Moxon E.R."/>
            <person name="Masignani V."/>
        </authorList>
    </citation>
    <scope>NUCLEOTIDE SEQUENCE [LARGE SCALE GENOMIC DNA]</scope>
    <source>
        <strain>P1031</strain>
    </source>
</reference>
<gene>
    <name evidence="1" type="primary">plsY</name>
    <name type="ordered locus">SPP_0859</name>
</gene>
<organism>
    <name type="scientific">Streptococcus pneumoniae (strain P1031)</name>
    <dbReference type="NCBI Taxonomy" id="488223"/>
    <lineage>
        <taxon>Bacteria</taxon>
        <taxon>Bacillati</taxon>
        <taxon>Bacillota</taxon>
        <taxon>Bacilli</taxon>
        <taxon>Lactobacillales</taxon>
        <taxon>Streptococcaceae</taxon>
        <taxon>Streptococcus</taxon>
    </lineage>
</organism>
<comment type="function">
    <text evidence="1">Catalyzes the transfer of an acyl group from acyl-phosphate (acyl-PO(4)) to glycerol-3-phosphate (G3P) to form lysophosphatidic acid (LPA). This enzyme utilizes acyl-phosphate as fatty acyl donor, but not acyl-CoA or acyl-ACP.</text>
</comment>
<comment type="catalytic activity">
    <reaction evidence="1">
        <text>an acyl phosphate + sn-glycerol 3-phosphate = a 1-acyl-sn-glycero-3-phosphate + phosphate</text>
        <dbReference type="Rhea" id="RHEA:34075"/>
        <dbReference type="ChEBI" id="CHEBI:43474"/>
        <dbReference type="ChEBI" id="CHEBI:57597"/>
        <dbReference type="ChEBI" id="CHEBI:57970"/>
        <dbReference type="ChEBI" id="CHEBI:59918"/>
        <dbReference type="EC" id="2.3.1.275"/>
    </reaction>
</comment>
<comment type="pathway">
    <text evidence="1">Lipid metabolism; phospholipid metabolism.</text>
</comment>
<comment type="subunit">
    <text evidence="1">Probably interacts with PlsX.</text>
</comment>
<comment type="subcellular location">
    <subcellularLocation>
        <location evidence="1">Cell membrane</location>
        <topology evidence="1">Multi-pass membrane protein</topology>
    </subcellularLocation>
</comment>
<comment type="similarity">
    <text evidence="1">Belongs to the PlsY family.</text>
</comment>
<protein>
    <recommendedName>
        <fullName evidence="1">Glycerol-3-phosphate acyltransferase</fullName>
    </recommendedName>
    <alternativeName>
        <fullName evidence="1">Acyl-PO4 G3P acyltransferase</fullName>
    </alternativeName>
    <alternativeName>
        <fullName evidence="1">Acyl-phosphate--glycerol-3-phosphate acyltransferase</fullName>
    </alternativeName>
    <alternativeName>
        <fullName evidence="1">G3P acyltransferase</fullName>
        <shortName evidence="1">GPAT</shortName>
        <ecNumber evidence="1">2.3.1.275</ecNumber>
    </alternativeName>
    <alternativeName>
        <fullName evidence="1">Lysophosphatidic acid synthase</fullName>
        <shortName evidence="1">LPA synthase</shortName>
    </alternativeName>
</protein>
<dbReference type="EC" id="2.3.1.275" evidence="1"/>
<dbReference type="EMBL" id="CP000920">
    <property type="protein sequence ID" value="ACO20669.1"/>
    <property type="molecule type" value="Genomic_DNA"/>
</dbReference>
<dbReference type="RefSeq" id="WP_000628789.1">
    <property type="nucleotide sequence ID" value="NC_012467.1"/>
</dbReference>
<dbReference type="SMR" id="C1CJU2"/>
<dbReference type="GeneID" id="45653793"/>
<dbReference type="KEGG" id="spp:SPP_0859"/>
<dbReference type="HOGENOM" id="CLU_081254_4_0_9"/>
<dbReference type="UniPathway" id="UPA00085"/>
<dbReference type="GO" id="GO:0005886">
    <property type="term" value="C:plasma membrane"/>
    <property type="evidence" value="ECO:0007669"/>
    <property type="project" value="UniProtKB-SubCell"/>
</dbReference>
<dbReference type="GO" id="GO:0043772">
    <property type="term" value="F:acyl-phosphate glycerol-3-phosphate acyltransferase activity"/>
    <property type="evidence" value="ECO:0007669"/>
    <property type="project" value="UniProtKB-UniRule"/>
</dbReference>
<dbReference type="GO" id="GO:0008654">
    <property type="term" value="P:phospholipid biosynthetic process"/>
    <property type="evidence" value="ECO:0007669"/>
    <property type="project" value="UniProtKB-UniRule"/>
</dbReference>
<dbReference type="HAMAP" id="MF_01043">
    <property type="entry name" value="PlsY"/>
    <property type="match status" value="1"/>
</dbReference>
<dbReference type="InterPro" id="IPR003811">
    <property type="entry name" value="G3P_acylTferase_PlsY"/>
</dbReference>
<dbReference type="NCBIfam" id="TIGR00023">
    <property type="entry name" value="glycerol-3-phosphate 1-O-acyltransferase PlsY"/>
    <property type="match status" value="1"/>
</dbReference>
<dbReference type="PANTHER" id="PTHR30309:SF0">
    <property type="entry name" value="GLYCEROL-3-PHOSPHATE ACYLTRANSFERASE-RELATED"/>
    <property type="match status" value="1"/>
</dbReference>
<dbReference type="PANTHER" id="PTHR30309">
    <property type="entry name" value="INNER MEMBRANE PROTEIN YGIH"/>
    <property type="match status" value="1"/>
</dbReference>
<dbReference type="Pfam" id="PF02660">
    <property type="entry name" value="G3P_acyltransf"/>
    <property type="match status" value="1"/>
</dbReference>
<dbReference type="SMART" id="SM01207">
    <property type="entry name" value="G3P_acyltransf"/>
    <property type="match status" value="1"/>
</dbReference>
<sequence>MITIVLLILAYLLGSIPSGLWIGQVFFQINLREHGSGNTGTTNTFRILGKKAGMATFVIDFFKGTLATLLPIIFHLQGVSPLIFGLLAVIGHTFPIFAGFKGGKAVATSAGVIFGFAPIFCLYLAIIFFGALYLGSMISLSSVTASIAAVIGVLLFPLFGFILSNYDSLFIAIILALASLIIIRHKDNIARIKNKTENLVPWGLNLTHQDPKK</sequence>
<feature type="chain" id="PRO_1000149587" description="Glycerol-3-phosphate acyltransferase">
    <location>
        <begin position="1"/>
        <end position="213"/>
    </location>
</feature>
<feature type="transmembrane region" description="Helical" evidence="1">
    <location>
        <begin position="2"/>
        <end position="22"/>
    </location>
</feature>
<feature type="transmembrane region" description="Helical" evidence="1">
    <location>
        <begin position="52"/>
        <end position="74"/>
    </location>
</feature>
<feature type="transmembrane region" description="Helical" evidence="1">
    <location>
        <begin position="81"/>
        <end position="100"/>
    </location>
</feature>
<feature type="transmembrane region" description="Helical" evidence="1">
    <location>
        <begin position="112"/>
        <end position="132"/>
    </location>
</feature>
<feature type="transmembrane region" description="Helical" evidence="1">
    <location>
        <begin position="143"/>
        <end position="163"/>
    </location>
</feature>
<feature type="transmembrane region" description="Helical" evidence="1">
    <location>
        <begin position="164"/>
        <end position="184"/>
    </location>
</feature>
<name>PLSY_STRZP</name>
<accession>C1CJU2</accession>